<name>EDN1_FELCA</name>
<accession>Q5NRQ1</accession>
<feature type="signal peptide" evidence="6">
    <location>
        <begin position="1"/>
        <end position="25"/>
    </location>
</feature>
<feature type="propeptide" id="PRO_0000008055" evidence="5">
    <location>
        <begin position="26"/>
        <end position="50"/>
    </location>
</feature>
<feature type="peptide" id="PRO_0000436396" description="Big endothelin-1" evidence="5">
    <location>
        <begin position="53"/>
        <end position="91"/>
    </location>
</feature>
<feature type="peptide" id="PRO_0000008056" description="Endothelin-1">
    <location>
        <begin position="53"/>
        <end position="73"/>
    </location>
</feature>
<feature type="propeptide" id="PRO_0000008057" evidence="1">
    <location>
        <begin position="74"/>
        <end position="202"/>
    </location>
</feature>
<feature type="region of interest" description="Disordered" evidence="7">
    <location>
        <begin position="28"/>
        <end position="48"/>
    </location>
</feature>
<feature type="region of interest" description="Endothelin-like">
    <location>
        <begin position="110"/>
        <end position="124"/>
    </location>
</feature>
<feature type="site" description="Cleavage; by KEL" evidence="2">
    <location>
        <begin position="73"/>
        <end position="74"/>
    </location>
</feature>
<feature type="disulfide bond" evidence="2">
    <location>
        <begin position="53"/>
        <end position="67"/>
    </location>
</feature>
<feature type="disulfide bond" evidence="2">
    <location>
        <begin position="55"/>
        <end position="63"/>
    </location>
</feature>
<sequence length="202" mass="22913">MDYLPVLFSLLLVVFQGAPEAAVLGAELSTGPDSGGEKPAPSAPWRPRRSKRCSCSSLLDKECVYFCHLDIIWVNTPEHIVPYGLGSPSRSKRSLKDLFATKATDHRNRCQCASQKDKKCWTFCQVRKELRGQDSMEKGWDDQKKGKDCSELGEKCTHHQLVAGRKIRRLDAVRNSIKTAFRVAKLKAEIYREKKVTHNRTH</sequence>
<proteinExistence type="evidence at transcript level"/>
<comment type="function">
    <text evidence="2 3 4">Endothelins are endothelium-derived vasoconstrictor peptides (By similarity). Probable ligand for G-protein coupled receptors EDNRA and EDNRB which activates PTK2B, BCAR1, BCAR3 and, GTPases RAP1 and RHOA cascade in glomerular mesangial cells (By similarity). Also binds the DEAR/FBXW7-AS1 receptor (By similarity). Promotes mesenteric arterial wall remodeling via activation of ROCK signaling and subsequent colocalization of NFATC3 with F-actin filaments (By similarity). NFATC3 then translocates to the nucleus where it subsequently promotes the transcription of the smooth muscle hypertrophy and differentiation marker ACTA2 (By similarity).</text>
</comment>
<comment type="subcellular location">
    <subcellularLocation>
        <location evidence="1">Secreted</location>
    </subcellularLocation>
</comment>
<comment type="similarity">
    <text evidence="8">Belongs to the endothelin/sarafotoxin family.</text>
</comment>
<protein>
    <recommendedName>
        <fullName>Endothelin-1</fullName>
        <shortName>ET-1</shortName>
    </recommendedName>
    <alternativeName>
        <fullName>Preproendothelin-1</fullName>
        <shortName>PPET1</shortName>
    </alternativeName>
    <component>
        <recommendedName>
            <fullName>Big endothelin-1</fullName>
        </recommendedName>
    </component>
</protein>
<dbReference type="EMBL" id="AB197698">
    <property type="protein sequence ID" value="BAD83370.1"/>
    <property type="molecule type" value="mRNA"/>
</dbReference>
<dbReference type="RefSeq" id="NP_001009386.1">
    <property type="nucleotide sequence ID" value="NM_001009386.1"/>
</dbReference>
<dbReference type="FunCoup" id="Q5NRQ1">
    <property type="interactions" value="9"/>
</dbReference>
<dbReference type="STRING" id="9685.ENSFCAP00000013767"/>
<dbReference type="PaxDb" id="9685-ENSFCAP00000013767"/>
<dbReference type="GeneID" id="494214"/>
<dbReference type="KEGG" id="fca:494214"/>
<dbReference type="CTD" id="1906"/>
<dbReference type="eggNOG" id="ENOG502S1NV">
    <property type="taxonomic scope" value="Eukaryota"/>
</dbReference>
<dbReference type="InParanoid" id="Q5NRQ1"/>
<dbReference type="OrthoDB" id="8873756at2759"/>
<dbReference type="Proteomes" id="UP000011712">
    <property type="component" value="Unplaced"/>
</dbReference>
<dbReference type="GO" id="GO:0005615">
    <property type="term" value="C:extracellular space"/>
    <property type="evidence" value="ECO:0000318"/>
    <property type="project" value="GO_Central"/>
</dbReference>
<dbReference type="GO" id="GO:0031707">
    <property type="term" value="F:endothelin A receptor binding"/>
    <property type="evidence" value="ECO:0000318"/>
    <property type="project" value="GO_Central"/>
</dbReference>
<dbReference type="GO" id="GO:0031708">
    <property type="term" value="F:endothelin B receptor binding"/>
    <property type="evidence" value="ECO:0000318"/>
    <property type="project" value="GO_Central"/>
</dbReference>
<dbReference type="GO" id="GO:0005179">
    <property type="term" value="F:hormone activity"/>
    <property type="evidence" value="ECO:0000318"/>
    <property type="project" value="GO_Central"/>
</dbReference>
<dbReference type="GO" id="GO:0086100">
    <property type="term" value="P:endothelin receptor signaling pathway"/>
    <property type="evidence" value="ECO:0000250"/>
    <property type="project" value="UniProtKB"/>
</dbReference>
<dbReference type="GO" id="GO:0006874">
    <property type="term" value="P:intracellular calcium ion homeostasis"/>
    <property type="evidence" value="ECO:0000318"/>
    <property type="project" value="GO_Central"/>
</dbReference>
<dbReference type="GO" id="GO:1900182">
    <property type="term" value="P:positive regulation of protein localization to nucleus"/>
    <property type="evidence" value="ECO:0000250"/>
    <property type="project" value="UniProtKB"/>
</dbReference>
<dbReference type="GO" id="GO:0045987">
    <property type="term" value="P:positive regulation of smooth muscle contraction"/>
    <property type="evidence" value="ECO:0000318"/>
    <property type="project" value="GO_Central"/>
</dbReference>
<dbReference type="GO" id="GO:0003100">
    <property type="term" value="P:regulation of systemic arterial blood pressure by endothelin"/>
    <property type="evidence" value="ECO:0000318"/>
    <property type="project" value="GO_Central"/>
</dbReference>
<dbReference type="GO" id="GO:0019229">
    <property type="term" value="P:regulation of vasoconstriction"/>
    <property type="evidence" value="ECO:0007669"/>
    <property type="project" value="InterPro"/>
</dbReference>
<dbReference type="GO" id="GO:0014826">
    <property type="term" value="P:vein smooth muscle contraction"/>
    <property type="evidence" value="ECO:0000318"/>
    <property type="project" value="GO_Central"/>
</dbReference>
<dbReference type="InterPro" id="IPR020475">
    <property type="entry name" value="Endothelin"/>
</dbReference>
<dbReference type="InterPro" id="IPR019764">
    <property type="entry name" value="Endothelin_toxin_CS"/>
</dbReference>
<dbReference type="InterPro" id="IPR001928">
    <property type="entry name" value="Endothln-like_toxin"/>
</dbReference>
<dbReference type="PANTHER" id="PTHR13874">
    <property type="entry name" value="ENDOTHELIN"/>
    <property type="match status" value="1"/>
</dbReference>
<dbReference type="PANTHER" id="PTHR13874:SF10">
    <property type="entry name" value="ENDOTHELIN-1"/>
    <property type="match status" value="1"/>
</dbReference>
<dbReference type="Pfam" id="PF00322">
    <property type="entry name" value="Endothelin"/>
    <property type="match status" value="1"/>
</dbReference>
<dbReference type="PRINTS" id="PR00365">
    <property type="entry name" value="ENDOTHELIN"/>
</dbReference>
<dbReference type="SMART" id="SM00272">
    <property type="entry name" value="END"/>
    <property type="match status" value="2"/>
</dbReference>
<dbReference type="PROSITE" id="PS00270">
    <property type="entry name" value="ENDOTHELIN"/>
    <property type="match status" value="2"/>
</dbReference>
<organism>
    <name type="scientific">Felis catus</name>
    <name type="common">Cat</name>
    <name type="synonym">Felis silvestris catus</name>
    <dbReference type="NCBI Taxonomy" id="9685"/>
    <lineage>
        <taxon>Eukaryota</taxon>
        <taxon>Metazoa</taxon>
        <taxon>Chordata</taxon>
        <taxon>Craniata</taxon>
        <taxon>Vertebrata</taxon>
        <taxon>Euteleostomi</taxon>
        <taxon>Mammalia</taxon>
        <taxon>Eutheria</taxon>
        <taxon>Laurasiatheria</taxon>
        <taxon>Carnivora</taxon>
        <taxon>Feliformia</taxon>
        <taxon>Felidae</taxon>
        <taxon>Felinae</taxon>
        <taxon>Felis</taxon>
    </lineage>
</organism>
<gene>
    <name type="primary">EDN1</name>
</gene>
<evidence type="ECO:0000250" key="1"/>
<evidence type="ECO:0000250" key="2">
    <source>
        <dbReference type="UniProtKB" id="P05305"/>
    </source>
</evidence>
<evidence type="ECO:0000250" key="3">
    <source>
        <dbReference type="UniProtKB" id="P09558"/>
    </source>
</evidence>
<evidence type="ECO:0000250" key="4">
    <source>
        <dbReference type="UniProtKB" id="P22387"/>
    </source>
</evidence>
<evidence type="ECO:0000250" key="5">
    <source>
        <dbReference type="UniProtKB" id="P22388"/>
    </source>
</evidence>
<evidence type="ECO:0000255" key="6"/>
<evidence type="ECO:0000256" key="7">
    <source>
        <dbReference type="SAM" id="MobiDB-lite"/>
    </source>
</evidence>
<evidence type="ECO:0000305" key="8"/>
<reference key="1">
    <citation type="submission" date="2004-12" db="EMBL/GenBank/DDBJ databases">
        <title>Cloning of cat preproendothelin-1 cDNA.</title>
        <authorList>
            <person name="Uchide T."/>
        </authorList>
    </citation>
    <scope>NUCLEOTIDE SEQUENCE [MRNA]</scope>
</reference>
<keyword id="KW-0165">Cleavage on pair of basic residues</keyword>
<keyword id="KW-1015">Disulfide bond</keyword>
<keyword id="KW-1185">Reference proteome</keyword>
<keyword id="KW-0964">Secreted</keyword>
<keyword id="KW-0732">Signal</keyword>
<keyword id="KW-0838">Vasoactive</keyword>
<keyword id="KW-0839">Vasoconstrictor</keyword>